<name>NSA1_CANAL</name>
<evidence type="ECO:0000250" key="1"/>
<evidence type="ECO:0000256" key="2">
    <source>
        <dbReference type="SAM" id="MobiDB-lite"/>
    </source>
</evidence>
<evidence type="ECO:0000305" key="3"/>
<proteinExistence type="inferred from homology"/>
<comment type="function">
    <text evidence="1">Involved in the biogenesis of the 60S ribosomal subunit.</text>
</comment>
<comment type="subunit">
    <text evidence="1">Component of the pre-66S ribosomal particle.</text>
</comment>
<comment type="subcellular location">
    <subcellularLocation>
        <location evidence="1">Nucleus</location>
        <location evidence="1">Nucleolus</location>
    </subcellularLocation>
</comment>
<comment type="similarity">
    <text evidence="3">Belongs to the NSA1 family.</text>
</comment>
<organism>
    <name type="scientific">Candida albicans (strain SC5314 / ATCC MYA-2876)</name>
    <name type="common">Yeast</name>
    <dbReference type="NCBI Taxonomy" id="237561"/>
    <lineage>
        <taxon>Eukaryota</taxon>
        <taxon>Fungi</taxon>
        <taxon>Dikarya</taxon>
        <taxon>Ascomycota</taxon>
        <taxon>Saccharomycotina</taxon>
        <taxon>Pichiomycetes</taxon>
        <taxon>Debaryomycetaceae</taxon>
        <taxon>Candida/Lodderomyces clade</taxon>
        <taxon>Candida</taxon>
    </lineage>
</organism>
<keyword id="KW-0539">Nucleus</keyword>
<keyword id="KW-1185">Reference proteome</keyword>
<keyword id="KW-0690">Ribosome biogenesis</keyword>
<keyword id="KW-0698">rRNA processing</keyword>
<protein>
    <recommendedName>
        <fullName>Ribosome biogenesis protein NSA1</fullName>
    </recommendedName>
</protein>
<reference key="1">
    <citation type="journal article" date="2004" name="Proc. Natl. Acad. Sci. U.S.A.">
        <title>The diploid genome sequence of Candida albicans.</title>
        <authorList>
            <person name="Jones T."/>
            <person name="Federspiel N.A."/>
            <person name="Chibana H."/>
            <person name="Dungan J."/>
            <person name="Kalman S."/>
            <person name="Magee B.B."/>
            <person name="Newport G."/>
            <person name="Thorstenson Y.R."/>
            <person name="Agabian N."/>
            <person name="Magee P.T."/>
            <person name="Davis R.W."/>
            <person name="Scherer S."/>
        </authorList>
    </citation>
    <scope>NUCLEOTIDE SEQUENCE [LARGE SCALE GENOMIC DNA]</scope>
    <source>
        <strain>SC5314 / ATCC MYA-2876</strain>
    </source>
</reference>
<reference key="2">
    <citation type="journal article" date="2007" name="Genome Biol.">
        <title>Assembly of the Candida albicans genome into sixteen supercontigs aligned on the eight chromosomes.</title>
        <authorList>
            <person name="van het Hoog M."/>
            <person name="Rast T.J."/>
            <person name="Martchenko M."/>
            <person name="Grindle S."/>
            <person name="Dignard D."/>
            <person name="Hogues H."/>
            <person name="Cuomo C."/>
            <person name="Berriman M."/>
            <person name="Scherer S."/>
            <person name="Magee B.B."/>
            <person name="Whiteway M."/>
            <person name="Chibana H."/>
            <person name="Nantel A."/>
            <person name="Magee P.T."/>
        </authorList>
    </citation>
    <scope>GENOME REANNOTATION</scope>
    <source>
        <strain>SC5314 / ATCC MYA-2876</strain>
    </source>
</reference>
<reference key="3">
    <citation type="journal article" date="2013" name="Genome Biol.">
        <title>Assembly of a phased diploid Candida albicans genome facilitates allele-specific measurements and provides a simple model for repeat and indel structure.</title>
        <authorList>
            <person name="Muzzey D."/>
            <person name="Schwartz K."/>
            <person name="Weissman J.S."/>
            <person name="Sherlock G."/>
        </authorList>
    </citation>
    <scope>NUCLEOTIDE SEQUENCE [LARGE SCALE GENOMIC DNA]</scope>
    <scope>GENOME REANNOTATION</scope>
    <source>
        <strain>SC5314 / ATCC MYA-2876</strain>
    </source>
</reference>
<gene>
    <name type="primary">NSA1</name>
    <name type="ordered locus">CAALFM_C207960CA</name>
    <name type="ORF">CaO19.2185</name>
    <name type="ORF">CaO19.9731</name>
</gene>
<dbReference type="EMBL" id="CP017624">
    <property type="protein sequence ID" value="AOW27792.1"/>
    <property type="molecule type" value="Genomic_DNA"/>
</dbReference>
<dbReference type="RefSeq" id="XP_716026.1">
    <property type="nucleotide sequence ID" value="XM_710933.2"/>
</dbReference>
<dbReference type="SMR" id="Q5A2T0"/>
<dbReference type="FunCoup" id="Q5A2T0">
    <property type="interactions" value="670"/>
</dbReference>
<dbReference type="STRING" id="237561.Q5A2T0"/>
<dbReference type="EnsemblFungi" id="C2_07960C_A-T">
    <property type="protein sequence ID" value="C2_07960C_A-T-p1"/>
    <property type="gene ID" value="C2_07960C_A"/>
</dbReference>
<dbReference type="GeneID" id="3642313"/>
<dbReference type="KEGG" id="cal:CAALFM_C207960CA"/>
<dbReference type="CGD" id="CAL0000184567">
    <property type="gene designation" value="NSA1"/>
</dbReference>
<dbReference type="VEuPathDB" id="FungiDB:C2_07960C_A"/>
<dbReference type="eggNOG" id="KOG3881">
    <property type="taxonomic scope" value="Eukaryota"/>
</dbReference>
<dbReference type="HOGENOM" id="CLU_033769_4_0_1"/>
<dbReference type="InParanoid" id="Q5A2T0"/>
<dbReference type="OMA" id="IWEAKNV"/>
<dbReference type="OrthoDB" id="18388at2759"/>
<dbReference type="PRO" id="PR:Q5A2T0"/>
<dbReference type="Proteomes" id="UP000000559">
    <property type="component" value="Chromosome 2"/>
</dbReference>
<dbReference type="GO" id="GO:0005730">
    <property type="term" value="C:nucleolus"/>
    <property type="evidence" value="ECO:0000318"/>
    <property type="project" value="GO_Central"/>
</dbReference>
<dbReference type="GO" id="GO:0030687">
    <property type="term" value="C:preribosome, large subunit precursor"/>
    <property type="evidence" value="ECO:0000318"/>
    <property type="project" value="GO_Central"/>
</dbReference>
<dbReference type="GO" id="GO:0042273">
    <property type="term" value="P:ribosomal large subunit biogenesis"/>
    <property type="evidence" value="ECO:0000318"/>
    <property type="project" value="GO_Central"/>
</dbReference>
<dbReference type="GO" id="GO:0006364">
    <property type="term" value="P:rRNA processing"/>
    <property type="evidence" value="ECO:0007669"/>
    <property type="project" value="UniProtKB-KW"/>
</dbReference>
<dbReference type="CDD" id="cd22858">
    <property type="entry name" value="Nsa1"/>
    <property type="match status" value="1"/>
</dbReference>
<dbReference type="FunFam" id="2.130.10.10:FF:001966">
    <property type="entry name" value="Ribosome biogenesis protein NSA1"/>
    <property type="match status" value="1"/>
</dbReference>
<dbReference type="Gene3D" id="2.130.10.10">
    <property type="entry name" value="YVTN repeat-like/Quinoprotein amine dehydrogenase"/>
    <property type="match status" value="1"/>
</dbReference>
<dbReference type="InterPro" id="IPR015943">
    <property type="entry name" value="WD40/YVTN_repeat-like_dom_sf"/>
</dbReference>
<dbReference type="InterPro" id="IPR036322">
    <property type="entry name" value="WD40_repeat_dom_sf"/>
</dbReference>
<dbReference type="InterPro" id="IPR037379">
    <property type="entry name" value="WDR74/Nsa1"/>
</dbReference>
<dbReference type="PANTHER" id="PTHR16038">
    <property type="entry name" value="NOP SEVEN ASSOCIATED PROTEIN 1"/>
    <property type="match status" value="1"/>
</dbReference>
<dbReference type="PANTHER" id="PTHR16038:SF4">
    <property type="entry name" value="WD REPEAT-CONTAINING PROTEIN 74"/>
    <property type="match status" value="1"/>
</dbReference>
<dbReference type="SUPFAM" id="SSF50978">
    <property type="entry name" value="WD40 repeat-like"/>
    <property type="match status" value="1"/>
</dbReference>
<sequence length="406" mass="45966">MKVIVSADDTGSAKEVICNEGTDTSKQNATQPISIDNCLLEPSSSVKSRIIHFLSFNYQYLIGARLGGQVSVYELSDEESEEKFKLLHNFELPVDAQDKPVALLRVEILDSILVAFESSKVFLIHINDSFDFKPLELVLPEYKPISAFAINPQAENIVALGGKEHDLQILQLFNKNINSTVFKKNNYENEFKPQIIFKAKNVRNDHLELRVPIWITNILFAKAAKGYKLVTSTRYGQIRLYDTAEGRKPRKDYKVTEKPIVTLTFANDEQTEIIVTDTHSLIAKYSLTQVDEKAFKTISASAGEIVKPVPKLLGKFTGGNTGATFGVHAYERIVAFAGLDRYLRVFDLESREILAKVYLGVEVSALLILDDEDTEDEETKKRKRKEEEDDEELWNQLDTKKKTHTI</sequence>
<feature type="chain" id="PRO_0000320396" description="Ribosome biogenesis protein NSA1">
    <location>
        <begin position="1"/>
        <end position="406"/>
    </location>
</feature>
<feature type="region of interest" description="Disordered" evidence="2">
    <location>
        <begin position="373"/>
        <end position="406"/>
    </location>
</feature>
<accession>Q5A2T0</accession>
<accession>A0A1D8PI72</accession>